<reference key="1">
    <citation type="journal article" date="2002" name="Nature">
        <title>The genome sequence of Schizosaccharomyces pombe.</title>
        <authorList>
            <person name="Wood V."/>
            <person name="Gwilliam R."/>
            <person name="Rajandream M.A."/>
            <person name="Lyne M.H."/>
            <person name="Lyne R."/>
            <person name="Stewart A."/>
            <person name="Sgouros J.G."/>
            <person name="Peat N."/>
            <person name="Hayles J."/>
            <person name="Baker S.G."/>
            <person name="Basham D."/>
            <person name="Bowman S."/>
            <person name="Brooks K."/>
            <person name="Brown D."/>
            <person name="Brown S."/>
            <person name="Chillingworth T."/>
            <person name="Churcher C.M."/>
            <person name="Collins M."/>
            <person name="Connor R."/>
            <person name="Cronin A."/>
            <person name="Davis P."/>
            <person name="Feltwell T."/>
            <person name="Fraser A."/>
            <person name="Gentles S."/>
            <person name="Goble A."/>
            <person name="Hamlin N."/>
            <person name="Harris D.E."/>
            <person name="Hidalgo J."/>
            <person name="Hodgson G."/>
            <person name="Holroyd S."/>
            <person name="Hornsby T."/>
            <person name="Howarth S."/>
            <person name="Huckle E.J."/>
            <person name="Hunt S."/>
            <person name="Jagels K."/>
            <person name="James K.D."/>
            <person name="Jones L."/>
            <person name="Jones M."/>
            <person name="Leather S."/>
            <person name="McDonald S."/>
            <person name="McLean J."/>
            <person name="Mooney P."/>
            <person name="Moule S."/>
            <person name="Mungall K.L."/>
            <person name="Murphy L.D."/>
            <person name="Niblett D."/>
            <person name="Odell C."/>
            <person name="Oliver K."/>
            <person name="O'Neil S."/>
            <person name="Pearson D."/>
            <person name="Quail M.A."/>
            <person name="Rabbinowitsch E."/>
            <person name="Rutherford K.M."/>
            <person name="Rutter S."/>
            <person name="Saunders D."/>
            <person name="Seeger K."/>
            <person name="Sharp S."/>
            <person name="Skelton J."/>
            <person name="Simmonds M.N."/>
            <person name="Squares R."/>
            <person name="Squares S."/>
            <person name="Stevens K."/>
            <person name="Taylor K."/>
            <person name="Taylor R.G."/>
            <person name="Tivey A."/>
            <person name="Walsh S.V."/>
            <person name="Warren T."/>
            <person name="Whitehead S."/>
            <person name="Woodward J.R."/>
            <person name="Volckaert G."/>
            <person name="Aert R."/>
            <person name="Robben J."/>
            <person name="Grymonprez B."/>
            <person name="Weltjens I."/>
            <person name="Vanstreels E."/>
            <person name="Rieger M."/>
            <person name="Schaefer M."/>
            <person name="Mueller-Auer S."/>
            <person name="Gabel C."/>
            <person name="Fuchs M."/>
            <person name="Duesterhoeft A."/>
            <person name="Fritzc C."/>
            <person name="Holzer E."/>
            <person name="Moestl D."/>
            <person name="Hilbert H."/>
            <person name="Borzym K."/>
            <person name="Langer I."/>
            <person name="Beck A."/>
            <person name="Lehrach H."/>
            <person name="Reinhardt R."/>
            <person name="Pohl T.M."/>
            <person name="Eger P."/>
            <person name="Zimmermann W."/>
            <person name="Wedler H."/>
            <person name="Wambutt R."/>
            <person name="Purnelle B."/>
            <person name="Goffeau A."/>
            <person name="Cadieu E."/>
            <person name="Dreano S."/>
            <person name="Gloux S."/>
            <person name="Lelaure V."/>
            <person name="Mottier S."/>
            <person name="Galibert F."/>
            <person name="Aves S.J."/>
            <person name="Xiang Z."/>
            <person name="Hunt C."/>
            <person name="Moore K."/>
            <person name="Hurst S.M."/>
            <person name="Lucas M."/>
            <person name="Rochet M."/>
            <person name="Gaillardin C."/>
            <person name="Tallada V.A."/>
            <person name="Garzon A."/>
            <person name="Thode G."/>
            <person name="Daga R.R."/>
            <person name="Cruzado L."/>
            <person name="Jimenez J."/>
            <person name="Sanchez M."/>
            <person name="del Rey F."/>
            <person name="Benito J."/>
            <person name="Dominguez A."/>
            <person name="Revuelta J.L."/>
            <person name="Moreno S."/>
            <person name="Armstrong J."/>
            <person name="Forsburg S.L."/>
            <person name="Cerutti L."/>
            <person name="Lowe T."/>
            <person name="McCombie W.R."/>
            <person name="Paulsen I."/>
            <person name="Potashkin J."/>
            <person name="Shpakovski G.V."/>
            <person name="Ussery D."/>
            <person name="Barrell B.G."/>
            <person name="Nurse P."/>
        </authorList>
    </citation>
    <scope>NUCLEOTIDE SEQUENCE [LARGE SCALE GENOMIC DNA]</scope>
    <source>
        <strain>972 / ATCC 24843</strain>
    </source>
</reference>
<protein>
    <recommendedName>
        <fullName evidence="3">Intermembrane lipid transfer protein vps1301</fullName>
    </recommendedName>
    <alternativeName>
        <fullName>Vacuolar protein sorting-associated protein 13a</fullName>
    </alternativeName>
</protein>
<sequence length="3071" mass="354011">MLEGLVAGLLNKILGSYVDNLDTKQLNIGVWGGHVSLHNLRIKPEALDKLGIPIEITSGLIGTFTLEIPWSNLRNKSLTINIEDIYLSIHPQAKNSLTRDELEQSQQALKQEQLDSFEILRKNFRETLEESSSNPNISRKQSFIEYLIAKLTDNIQIYIERIHLRFEDNLSDLEKPYSLGLTLYSLRVTSTDASFTEYLLSTDPIPSSCIHKIITVDYFSIYWISKCEISKCTTTEDIFSYLKNLIPSAEKSPAYNYILKPLRATAHVVLFRHPTDQIMQLRGKLSVEEISITLSDHMYYSLLGVIDYFRVVMKQQYYLQYRPKSTPKEKPLEWFKYAILVVKDSVHESRYHWTWKYFKRRRDDRIAYMHIIRKRYLNEQISKEEIDLQKKIEKRNSTYDLIKYRSRVHTSLIEERNSIYLKPKTSAAHGLYDWFSGYIRKPQSQDEDTLASTDKTAADLTDQEQKEFFSAIEWSGQLYPDTVNLDPDMCMANVEVSIAKGSFVIQSHINGRVIPLIKQRFESFATECFIRPQSLKLKVSLKDLDMFDGITNPELEPARVIFAKPSVEESESLQKIPEAYRTHLFFLLLDTKPVYKASSTLIVHLRTLVIIYNRVCIESLLAFFVPPRTKIEHVSEWGYSAAAKVMTLARQTRASLDYALEMHKTSDMTIDLQAPLIVVREECTDLKSPTLFLDVGRALVHTQLVDDAIIDKFRKLQSKKINNEQLKQLENLMYDKFTISLFNVRCLIGPDYETGWRCLPKGCDYHILKECSLDINFEISILQKATNLTKFKVSSHMKHAEIMFSDVQYKVFINMMSNILPTLPVAEIPFTYQQFLDAVKPPPFFDAPDNFQITHTSLGSHANENTAAQFMAQQIFAFYFKVDYAICSLYRRSENYLIPVVRAFTEFYIDLVVRKFDYLVTSKLNDLVIKEFTYPSSLCDNVLVRSSPSPKNNFDDTVFISYTSIDYDSPELDSVYEGVRTTIAVVLSDLILNVEPTGFSFVYDFIRATFTSLNDEYMIGEDPELTRKISPVEGIIPEDANVRFDNVDIFLYDCDQHFSTVCLYSANMHMEFREKFFLQARFYDLEVKNHMKSNNPPKTIVKIDDNDLFIFKYESYDIPKDISKPTCDCVYDISFGSLTFYFQKSYFNAIYDFLLKLKRFQELFSSIRYAIYYKLYGNKVSLTYPKFELRIKHPKVYFDDVLDEERNCRMQLIVKPQSFYAFSKCPIVEKNSKKSIFSCEITKVEFHTAVPSSSHHDVLMEENNVHLDLTYDANYTTGAYVFKATGDLDPVILNMCQSHHVIFWDLIDVATTFARVDSSFYTSENLRRELDKAFDRSGTAAKLKHPKKTVVETLDILTTFNLPEIRLNVHTDDFWIHGGDLTQLHSILSFFGFSLDYNFYSSGRCYAEFSIDSIQLKDCNPQDNVVFLDVLEYSENHNRLVNGCLEYDSQNPRYNLVLDIDSPKIFVNLNYLYSIWSIFVHWHRAYYSHLDYLTEVEYFIMGNPNQNACGEESYWYYRITFVDMTLLFFRNVSDANLYSLPMFFGELLITQQSIFAVTANNMKINACPLSETANISNQLADPFGFRYTYSQHTVNKIQIITNITLDFDSFVLRTTVNDFLFLQTILRKIYNFYYALYDVPTTDVELLKRTKDDQLATNPDFLQLSVDTGQPSSVFGIRICKEEFLLTVDGIRLLVISQLHDLPLLNINIKPFQVDLNDWSSELNSNAHLELFMNFYNFSNSHWEPFLEPWKVGVHISRNPNTSKTAVHVFSREKLDLVITPQLIETLHFGFTKVISTPFPIEFKCDAPYRIHNYTGHAVSVWADFENAADSCVRHLENNEETDWKFEEWRQMQDVVKQDQDRSYIGFHFENSKWESLRHVRVNRVGEHIYPLISYDQDELKHYMVVDVNLGEDYIKHITLRSPLLLINETQMEIDVVFCDSDGIQRSQIYHMSPEESCSLPIETAYYYSIHIRPVSEFKFNWTSEAISWKDLVDNKQSLVTCQHSDNTFSTPACRFAANAELKSQTISNHYPFMHITISALLEVKNLLPIDLNIRIIDKDQEGVWMSNVGIGECAYVHSINISHVLLLQAESSESHYLPSSLATIITNDSAQERDEYMTITLQGGRKTRLGLSYTEKYPGIYHIEIFSPYIIINKSGSFLFVGPKNDYNRISFSSASLSSGEDGKVVPCMFSYSHNYGSRRCRLRADNSNWSEPVSFDAIGSVFEVELPSKEDHNKVYRLGIFVETGPDGYSKTNIVTITSRFIVRNKTRWSLVIAEPYNDFIAEIAPEGEEFLTYLRKHSHPMLKLSSSDCYLWSSSFYIEEIGSTHVRLMTSEGEKLLRLEIVIKNATIFISIFEETGDWPYYIKNESGVLLKFWQVNPIDASEGKNNTALLKYHDIPPHSEVKYSWDYPCCANKEIALCYGDQKCLTTLAEIGPLSPFKFTDASNNTKFISRDIVANGLSKILILKDYDPSKAVRKPKIYSKVSTEERDFNLEQFDSGIDLSVKFLLEGIGISLVERNTQELAYLTFHGINLFFTDSHLIRTFKLDVRWIQIDNQLYGGIYPIILYPSILSQEDTMNDNSLLPTFHSMVAVVKNDTYGVTYVKYATILLQELTIEIDEDFAFAALEYIKDSVPRSKRNTGKMFDDSLELVPENLGNDLKVYFEVLNLQPTEMHLSFVRTERINNTDGTVVSSHNPFVFFVNVLSMAIGNINDAPVRLNALLMDNAHVSLRRLFELVKNHYSQELLSQVHKIVGSADFLGNPVGLFTTITSGFADIFYEPFHGFILNEGSYELGIGFAKGTASFIKKAVFGITDSISKVTGTISRSLSVITLDPKFQSRRRAARIRNRPVHILYGVTAGAASLYTGVRSGVRGLALQPIIGARRNGLPGLVKGLGKGLVGFTTKPLVGLFDFASSISEGARNTTTVFDERHIEKLRLSRLMSDDGVVYPFQLREALGQYWLKHLDNGRYFKDFYKAHIIIENKVLVILTNNRILFVQPQQLNCKKEIHLSKVKTVKLQSKEHIFLQLLKGVNFEFSVPENSVRTFFYRKIRDELAAYKHKVNYELEVAL</sequence>
<evidence type="ECO:0000250" key="1">
    <source>
        <dbReference type="UniProtKB" id="Q07878"/>
    </source>
</evidence>
<evidence type="ECO:0000255" key="2"/>
<evidence type="ECO:0000305" key="3"/>
<evidence type="ECO:0000312" key="4">
    <source>
        <dbReference type="PomBase" id="SPBC21C3.01c"/>
    </source>
</evidence>
<organism>
    <name type="scientific">Schizosaccharomyces pombe (strain 972 / ATCC 24843)</name>
    <name type="common">Fission yeast</name>
    <dbReference type="NCBI Taxonomy" id="284812"/>
    <lineage>
        <taxon>Eukaryota</taxon>
        <taxon>Fungi</taxon>
        <taxon>Dikarya</taxon>
        <taxon>Ascomycota</taxon>
        <taxon>Taphrinomycotina</taxon>
        <taxon>Schizosaccharomycetes</taxon>
        <taxon>Schizosaccharomycetales</taxon>
        <taxon>Schizosaccharomycetaceae</taxon>
        <taxon>Schizosaccharomyces</taxon>
    </lineage>
</organism>
<proteinExistence type="inferred from homology"/>
<name>VP13A_SCHPO</name>
<gene>
    <name evidence="4" type="primary">vps1301</name>
    <name evidence="4" type="synonym">vps13a</name>
    <name evidence="4" type="ORF">SPBC21C3.01c</name>
    <name evidence="4" type="ORF">SPBC31F10.18c</name>
</gene>
<accession>P87319</accession>
<accession>Q9P7M2</accession>
<comment type="function">
    <text evidence="1">Mediates the transfer of lipids between membranes at organelle contact sites (By similarity). May play a role in mitochondrial lipid homeostasis, Golgi vesicle transport, reticulophagy, actin cytoskeleton organization and formation of the forespore membrane (By similarity).</text>
</comment>
<comment type="subcellular location">
    <subcellularLocation>
        <location evidence="3">Golgi apparatus</location>
        <location evidence="3">trans-Golgi network</location>
    </subcellularLocation>
</comment>
<comment type="similarity">
    <text evidence="3">Belongs to the VPS13 family.</text>
</comment>
<keyword id="KW-0333">Golgi apparatus</keyword>
<keyword id="KW-0445">Lipid transport</keyword>
<keyword id="KW-1185">Reference proteome</keyword>
<keyword id="KW-0813">Transport</keyword>
<feature type="chain" id="PRO_0000116877" description="Intermembrane lipid transfer protein vps1301">
    <location>
        <begin position="1"/>
        <end position="3071"/>
    </location>
</feature>
<feature type="domain" description="Chorein N-terminal" evidence="2">
    <location>
        <begin position="2"/>
        <end position="115"/>
    </location>
</feature>
<feature type="domain" description="SHR-BD" evidence="2">
    <location>
        <begin position="2143"/>
        <end position="2415"/>
    </location>
</feature>
<dbReference type="EMBL" id="CU329671">
    <property type="protein sequence ID" value="CAB10094.2"/>
    <property type="molecule type" value="Genomic_DNA"/>
</dbReference>
<dbReference type="PIR" id="T50345">
    <property type="entry name" value="T50345"/>
</dbReference>
<dbReference type="RefSeq" id="XP_001713147.1">
    <property type="nucleotide sequence ID" value="XM_001713095.2"/>
</dbReference>
<dbReference type="SMR" id="P87319"/>
<dbReference type="FunCoup" id="P87319">
    <property type="interactions" value="279"/>
</dbReference>
<dbReference type="STRING" id="284812.P87319"/>
<dbReference type="iPTMnet" id="P87319"/>
<dbReference type="PaxDb" id="4896-SPBC21C3.01c.1"/>
<dbReference type="EnsemblFungi" id="SPBC21C3.01c.1">
    <property type="protein sequence ID" value="SPBC21C3.01c.1:pep"/>
    <property type="gene ID" value="SPBC21C3.01c"/>
</dbReference>
<dbReference type="PomBase" id="SPBC21C3.01c">
    <property type="gene designation" value="vps1301"/>
</dbReference>
<dbReference type="eggNOG" id="KOG1809">
    <property type="taxonomic scope" value="Eukaryota"/>
</dbReference>
<dbReference type="HOGENOM" id="CLU_000135_0_0_1"/>
<dbReference type="InParanoid" id="P87319"/>
<dbReference type="OMA" id="SGWRPIR"/>
<dbReference type="PhylomeDB" id="P87319"/>
<dbReference type="PRO" id="PR:P87319"/>
<dbReference type="Proteomes" id="UP000002485">
    <property type="component" value="Chromosome II"/>
</dbReference>
<dbReference type="GO" id="GO:0005829">
    <property type="term" value="C:cytosol"/>
    <property type="evidence" value="ECO:0007005"/>
    <property type="project" value="PomBase"/>
</dbReference>
<dbReference type="GO" id="GO:0005768">
    <property type="term" value="C:endosome"/>
    <property type="evidence" value="ECO:0000266"/>
    <property type="project" value="PomBase"/>
</dbReference>
<dbReference type="GO" id="GO:0005794">
    <property type="term" value="C:Golgi apparatus"/>
    <property type="evidence" value="ECO:0007669"/>
    <property type="project" value="UniProtKB-SubCell"/>
</dbReference>
<dbReference type="GO" id="GO:0005543">
    <property type="term" value="F:phospholipid binding"/>
    <property type="evidence" value="ECO:0000250"/>
    <property type="project" value="UniProtKB"/>
</dbReference>
<dbReference type="GO" id="GO:0120014">
    <property type="term" value="F:phospholipid transfer activity"/>
    <property type="evidence" value="ECO:0000250"/>
    <property type="project" value="UniProtKB"/>
</dbReference>
<dbReference type="GO" id="GO:0120009">
    <property type="term" value="P:intermembrane lipid transfer"/>
    <property type="evidence" value="ECO:0000250"/>
    <property type="project" value="UniProtKB"/>
</dbReference>
<dbReference type="GO" id="GO:0120010">
    <property type="term" value="P:intermembrane phospholipid transfer"/>
    <property type="evidence" value="ECO:0000304"/>
    <property type="project" value="PomBase"/>
</dbReference>
<dbReference type="GO" id="GO:0045324">
    <property type="term" value="P:late endosome to vacuole transport"/>
    <property type="evidence" value="ECO:0000318"/>
    <property type="project" value="GO_Central"/>
</dbReference>
<dbReference type="GO" id="GO:0007005">
    <property type="term" value="P:mitochondrion organization"/>
    <property type="evidence" value="ECO:0000318"/>
    <property type="project" value="GO_Central"/>
</dbReference>
<dbReference type="GO" id="GO:0045053">
    <property type="term" value="P:protein retention in Golgi apparatus"/>
    <property type="evidence" value="ECO:0000318"/>
    <property type="project" value="GO_Central"/>
</dbReference>
<dbReference type="GO" id="GO:0006623">
    <property type="term" value="P:protein targeting to vacuole"/>
    <property type="evidence" value="ECO:0000318"/>
    <property type="project" value="GO_Central"/>
</dbReference>
<dbReference type="InterPro" id="IPR026847">
    <property type="entry name" value="VPS13"/>
</dbReference>
<dbReference type="InterPro" id="IPR056748">
    <property type="entry name" value="VPS13-like_C"/>
</dbReference>
<dbReference type="InterPro" id="IPR056747">
    <property type="entry name" value="VPS13-like_M"/>
</dbReference>
<dbReference type="InterPro" id="IPR017148">
    <property type="entry name" value="VPS13_fungi"/>
</dbReference>
<dbReference type="InterPro" id="IPR026854">
    <property type="entry name" value="VPS13_N"/>
</dbReference>
<dbReference type="InterPro" id="IPR009543">
    <property type="entry name" value="VPS13_VAB"/>
</dbReference>
<dbReference type="PANTHER" id="PTHR16166:SF145">
    <property type="entry name" value="INTERMEMBRANE LIPID TRANSFER PROTEIN VPS1301"/>
    <property type="match status" value="1"/>
</dbReference>
<dbReference type="PANTHER" id="PTHR16166">
    <property type="entry name" value="VACUOLAR PROTEIN SORTING-ASSOCIATED PROTEIN VPS13"/>
    <property type="match status" value="1"/>
</dbReference>
<dbReference type="Pfam" id="PF25037">
    <property type="entry name" value="VPS13_C"/>
    <property type="match status" value="1"/>
</dbReference>
<dbReference type="Pfam" id="PF25033">
    <property type="entry name" value="VPS13_M"/>
    <property type="match status" value="1"/>
</dbReference>
<dbReference type="Pfam" id="PF12624">
    <property type="entry name" value="VPS13_N"/>
    <property type="match status" value="1"/>
</dbReference>
<dbReference type="Pfam" id="PF25036">
    <property type="entry name" value="VPS13_VAB"/>
    <property type="match status" value="1"/>
</dbReference>
<dbReference type="PIRSF" id="PIRSF037235">
    <property type="entry name" value="VPS13_fungi"/>
    <property type="match status" value="1"/>
</dbReference>